<accession>P77228</accession>
<accession>A0A385XJK1</accession>
<accession>P76884</accession>
<name>YDFJ_ECOLI</name>
<sequence>MDFQLYSLGAALVFHEIFFPESSTAMALILAMGTYGAGYVARIVGAFIFGKMGDRIGRKKVLFITITMMGICTTLIGVLPTYAQIGVFAPILLVTLRIIQGLGAGAEISGAGTMLAEYAPKGKRGIISSFVAMGTNCGTLSATAIWAFMFFILSKEELLAWGWRIPFLASVVVMVFAIWLRMNLKESPVFEKVNDSNQPTAKPAPAGSMFQSKSFWLATGLRFGQAGNSGLIQTFLAGYLVQTLLFNKAIPTDALMISSILGFMTIPFLGWLSDKIGRRIPYIIMNTSAIVLAWPMLSIIVDKSYAPSTIMVALIVIHNCAVLGLFALENITMAEMFGCKNRFTRMAISKEIGGLIASGFGPILAGIFCTMTESWYPIAIMIMAYSVIGLISALKMPEVKDRDLSALEDAAEDQPRVVRAAQPSRSL</sequence>
<reference key="1">
    <citation type="journal article" date="1996" name="DNA Res.">
        <title>A 570-kb DNA sequence of the Escherichia coli K-12 genome corresponding to the 28.0-40.1 min region on the linkage map.</title>
        <authorList>
            <person name="Aiba H."/>
            <person name="Baba T."/>
            <person name="Fujita K."/>
            <person name="Hayashi K."/>
            <person name="Inada T."/>
            <person name="Isono K."/>
            <person name="Itoh T."/>
            <person name="Kasai H."/>
            <person name="Kashimoto K."/>
            <person name="Kimura S."/>
            <person name="Kitakawa M."/>
            <person name="Kitagawa M."/>
            <person name="Makino K."/>
            <person name="Miki T."/>
            <person name="Mizobuchi K."/>
            <person name="Mori H."/>
            <person name="Mori T."/>
            <person name="Motomura K."/>
            <person name="Nakade S."/>
            <person name="Nakamura Y."/>
            <person name="Nashimoto H."/>
            <person name="Nishio Y."/>
            <person name="Oshima T."/>
            <person name="Saito N."/>
            <person name="Sampei G."/>
            <person name="Seki Y."/>
            <person name="Sivasundaram S."/>
            <person name="Tagami H."/>
            <person name="Takeda J."/>
            <person name="Takemoto K."/>
            <person name="Takeuchi Y."/>
            <person name="Wada C."/>
            <person name="Yamamoto Y."/>
            <person name="Horiuchi T."/>
        </authorList>
    </citation>
    <scope>NUCLEOTIDE SEQUENCE [LARGE SCALE GENOMIC DNA]</scope>
    <source>
        <strain>K12 / W3110 / ATCC 27325 / DSM 5911</strain>
    </source>
</reference>
<reference key="2">
    <citation type="journal article" date="1997" name="Science">
        <title>The complete genome sequence of Escherichia coli K-12.</title>
        <authorList>
            <person name="Blattner F.R."/>
            <person name="Plunkett G. III"/>
            <person name="Bloch C.A."/>
            <person name="Perna N.T."/>
            <person name="Burland V."/>
            <person name="Riley M."/>
            <person name="Collado-Vides J."/>
            <person name="Glasner J.D."/>
            <person name="Rode C.K."/>
            <person name="Mayhew G.F."/>
            <person name="Gregor J."/>
            <person name="Davis N.W."/>
            <person name="Kirkpatrick H.A."/>
            <person name="Goeden M.A."/>
            <person name="Rose D.J."/>
            <person name="Mau B."/>
            <person name="Shao Y."/>
        </authorList>
    </citation>
    <scope>NUCLEOTIDE SEQUENCE [LARGE SCALE GENOMIC DNA]</scope>
    <source>
        <strain>K12 / MG1655 / ATCC 47076</strain>
    </source>
</reference>
<reference key="3">
    <citation type="journal article" date="2006" name="Mol. Syst. Biol.">
        <title>Highly accurate genome sequences of Escherichia coli K-12 strains MG1655 and W3110.</title>
        <authorList>
            <person name="Hayashi K."/>
            <person name="Morooka N."/>
            <person name="Yamamoto Y."/>
            <person name="Fujita K."/>
            <person name="Isono K."/>
            <person name="Choi S."/>
            <person name="Ohtsubo E."/>
            <person name="Baba T."/>
            <person name="Wanner B.L."/>
            <person name="Mori H."/>
            <person name="Horiuchi T."/>
        </authorList>
    </citation>
    <scope>NUCLEOTIDE SEQUENCE [LARGE SCALE GENOMIC DNA]</scope>
    <source>
        <strain>K12 / W3110 / ATCC 27325 / DSM 5911</strain>
    </source>
</reference>
<reference key="4">
    <citation type="journal article" date="2005" name="Science">
        <title>Global topology analysis of the Escherichia coli inner membrane proteome.</title>
        <authorList>
            <person name="Daley D.O."/>
            <person name="Rapp M."/>
            <person name="Granseth E."/>
            <person name="Melen K."/>
            <person name="Drew D."/>
            <person name="von Heijne G."/>
        </authorList>
    </citation>
    <scope>SUBCELLULAR LOCATION</scope>
    <scope>TOPOLOGY [LARGE SCALE ANALYSIS]</scope>
    <source>
        <strain>K12 / MG1655 / ATCC 47076</strain>
    </source>
</reference>
<reference key="5">
    <citation type="journal article" date="2011" name="J. Membr. Biol.">
        <title>Identification of a novel bacterial K(+) channel.</title>
        <authorList>
            <person name="Tang G."/>
            <person name="Jiang B."/>
            <person name="Huang Y."/>
            <person name="Fu M."/>
            <person name="Wu L."/>
            <person name="Wang R."/>
        </authorList>
    </citation>
    <scope>POSSIBLE FUNCTION</scope>
    <source>
        <strain>K12 / MG1655 / ATCC 47076</strain>
    </source>
</reference>
<feature type="chain" id="PRO_0000050482" description="Putative transporter YdfJ">
    <location>
        <begin position="1"/>
        <end position="427"/>
    </location>
</feature>
<feature type="topological domain" description="Cytoplasmic" evidence="1">
    <location>
        <begin position="1"/>
        <end position="7"/>
    </location>
</feature>
<feature type="transmembrane region" description="Helical; Name=1" evidence="1">
    <location>
        <begin position="8"/>
        <end position="28"/>
    </location>
</feature>
<feature type="transmembrane region" description="Helical; Name=2" evidence="1">
    <location>
        <begin position="29"/>
        <end position="49"/>
    </location>
</feature>
<feature type="topological domain" description="Cytoplasmic" evidence="1">
    <location>
        <begin position="50"/>
        <end position="74"/>
    </location>
</feature>
<feature type="transmembrane region" description="Helical; Name=3" evidence="1">
    <location>
        <begin position="75"/>
        <end position="95"/>
    </location>
</feature>
<feature type="topological domain" description="Periplasmic" evidence="1">
    <location>
        <begin position="96"/>
        <end position="97"/>
    </location>
</feature>
<feature type="transmembrane region" description="Helical; Name=4" evidence="1">
    <location>
        <begin position="98"/>
        <end position="118"/>
    </location>
</feature>
<feature type="topological domain" description="Cytoplasmic" evidence="1">
    <location>
        <begin position="119"/>
        <end position="132"/>
    </location>
</feature>
<feature type="transmembrane region" description="Helical; Name=5" evidence="1">
    <location>
        <begin position="133"/>
        <end position="153"/>
    </location>
</feature>
<feature type="topological domain" description="Periplasmic" evidence="1">
    <location>
        <begin position="154"/>
        <end position="157"/>
    </location>
</feature>
<feature type="transmembrane region" description="Helical; Name=6" evidence="1">
    <location>
        <begin position="158"/>
        <end position="178"/>
    </location>
</feature>
<feature type="topological domain" description="Cytoplasmic" evidence="1">
    <location>
        <begin position="179"/>
        <end position="225"/>
    </location>
</feature>
<feature type="transmembrane region" description="Helical; Name=7" evidence="1">
    <location>
        <begin position="226"/>
        <end position="246"/>
    </location>
</feature>
<feature type="topological domain" description="Periplasmic" evidence="1">
    <location>
        <begin position="247"/>
        <end position="251"/>
    </location>
</feature>
<feature type="transmembrane region" description="Helical; Name=8" evidence="1">
    <location>
        <begin position="252"/>
        <end position="272"/>
    </location>
</feature>
<feature type="topological domain" description="Cytoplasmic" evidence="1">
    <location>
        <begin position="273"/>
        <end position="279"/>
    </location>
</feature>
<feature type="transmembrane region" description="Helical; Name=9" evidence="1">
    <location>
        <begin position="280"/>
        <end position="300"/>
    </location>
</feature>
<feature type="topological domain" description="Periplasmic" evidence="1">
    <location>
        <begin position="301"/>
        <end position="307"/>
    </location>
</feature>
<feature type="transmembrane region" description="Helical; Name=10" evidence="1">
    <location>
        <begin position="308"/>
        <end position="328"/>
    </location>
</feature>
<feature type="topological domain" description="Cytoplasmic" evidence="1">
    <location>
        <begin position="329"/>
        <end position="351"/>
    </location>
</feature>
<feature type="transmembrane region" description="Helical; Name=11" evidence="1">
    <location>
        <begin position="352"/>
        <end position="372"/>
    </location>
</feature>
<feature type="topological domain" description="Periplasmic" evidence="1">
    <location>
        <position position="373"/>
    </location>
</feature>
<feature type="transmembrane region" description="Helical; Name=12" evidence="1">
    <location>
        <begin position="374"/>
        <end position="394"/>
    </location>
</feature>
<feature type="topological domain" description="Cytoplasmic" evidence="1 2">
    <location>
        <begin position="395"/>
        <end position="427"/>
    </location>
</feature>
<comment type="function">
    <text evidence="3">When overexpressed in human HEK-293 cells forms an inward rectifying potassium channel.</text>
</comment>
<comment type="subcellular location">
    <subcellularLocation>
        <location evidence="2">Cell inner membrane</location>
        <topology>Multi-pass membrane protein</topology>
    </subcellularLocation>
    <text evidence="2">When overexpressed using vectors that provide a promoter and ribosome binding site (PubMed:15919996).</text>
</comment>
<comment type="miscellaneous">
    <text evidence="4">YdfJ may constitute the C-terminal portion of an ancestral gene disrupted by an insertion of the cryptic prophage Qin/Kim. The N-terminal fragment may be ynfP.</text>
</comment>
<comment type="similarity">
    <text evidence="4">Belongs to the major facilitator superfamily. Metabolite:H+ Symporter (MHS) family (TC 2.A.1.6) family.</text>
</comment>
<protein>
    <recommendedName>
        <fullName>Putative transporter YdfJ</fullName>
    </recommendedName>
</protein>
<proteinExistence type="evidence at protein level"/>
<evidence type="ECO:0000255" key="1"/>
<evidence type="ECO:0000269" key="2">
    <source>
    </source>
</evidence>
<evidence type="ECO:0000269" key="3">
    <source>
    </source>
</evidence>
<evidence type="ECO:0000305" key="4"/>
<gene>
    <name type="primary">ydfJ</name>
    <name type="ordered locus">b1543</name>
    <name type="ordered locus">JW1536</name>
    <name type="ORF">b4600</name>
</gene>
<organism>
    <name type="scientific">Escherichia coli (strain K12)</name>
    <dbReference type="NCBI Taxonomy" id="83333"/>
    <lineage>
        <taxon>Bacteria</taxon>
        <taxon>Pseudomonadati</taxon>
        <taxon>Pseudomonadota</taxon>
        <taxon>Gammaproteobacteria</taxon>
        <taxon>Enterobacterales</taxon>
        <taxon>Enterobacteriaceae</taxon>
        <taxon>Escherichia</taxon>
    </lineage>
</organism>
<keyword id="KW-0997">Cell inner membrane</keyword>
<keyword id="KW-1003">Cell membrane</keyword>
<keyword id="KW-0472">Membrane</keyword>
<keyword id="KW-1185">Reference proteome</keyword>
<keyword id="KW-0769">Symport</keyword>
<keyword id="KW-0812">Transmembrane</keyword>
<keyword id="KW-1133">Transmembrane helix</keyword>
<keyword id="KW-0813">Transport</keyword>
<dbReference type="EMBL" id="U00096">
    <property type="protein sequence ID" value="AYC08214.1"/>
    <property type="molecule type" value="Genomic_DNA"/>
</dbReference>
<dbReference type="EMBL" id="AP009048">
    <property type="protein sequence ID" value="BAA15248.1"/>
    <property type="molecule type" value="Genomic_DNA"/>
</dbReference>
<dbReference type="PIR" id="B64909">
    <property type="entry name" value="B64909"/>
</dbReference>
<dbReference type="SMR" id="P77228"/>
<dbReference type="BioGRID" id="4260215">
    <property type="interactions" value="134"/>
</dbReference>
<dbReference type="DIP" id="DIP-11699N"/>
<dbReference type="FunCoup" id="P77228">
    <property type="interactions" value="38"/>
</dbReference>
<dbReference type="IntAct" id="P77228">
    <property type="interactions" value="1"/>
</dbReference>
<dbReference type="TCDB" id="2.A.1.6.9">
    <property type="family name" value="the major facilitator superfamily (mfs)"/>
</dbReference>
<dbReference type="EnsemblBacteria" id="AYC08214">
    <property type="protein sequence ID" value="AYC08214"/>
    <property type="gene ID" value="b1543"/>
</dbReference>
<dbReference type="KEGG" id="ecj:JW1536"/>
<dbReference type="KEGG" id="ecoc:C3026_08910"/>
<dbReference type="PATRIC" id="fig|83333.103.peg.2375"/>
<dbReference type="EchoBASE" id="EB3583"/>
<dbReference type="eggNOG" id="COG0477">
    <property type="taxonomic scope" value="Bacteria"/>
</dbReference>
<dbReference type="HOGENOM" id="CLU_001265_39_5_6"/>
<dbReference type="InParanoid" id="P77228"/>
<dbReference type="OMA" id="EMFGSRN"/>
<dbReference type="OrthoDB" id="3690818at2"/>
<dbReference type="PhylomeDB" id="P77228"/>
<dbReference type="BioCyc" id="EcoCyc:B1543-MONOMER"/>
<dbReference type="PRO" id="PR:P77228"/>
<dbReference type="Proteomes" id="UP000000625">
    <property type="component" value="Chromosome"/>
</dbReference>
<dbReference type="GO" id="GO:0005886">
    <property type="term" value="C:plasma membrane"/>
    <property type="evidence" value="ECO:0000314"/>
    <property type="project" value="EcoCyc"/>
</dbReference>
<dbReference type="GO" id="GO:0005267">
    <property type="term" value="F:potassium channel activity"/>
    <property type="evidence" value="ECO:0000314"/>
    <property type="project" value="EcoCyc"/>
</dbReference>
<dbReference type="GO" id="GO:0015293">
    <property type="term" value="F:symporter activity"/>
    <property type="evidence" value="ECO:0007669"/>
    <property type="project" value="UniProtKB-KW"/>
</dbReference>
<dbReference type="CDD" id="cd17369">
    <property type="entry name" value="MFS_ShiA_like"/>
    <property type="match status" value="1"/>
</dbReference>
<dbReference type="FunFam" id="1.20.1250.20:FF:000227">
    <property type="entry name" value="MFS transporter, metabolite:H+ symporter family protein"/>
    <property type="match status" value="1"/>
</dbReference>
<dbReference type="Gene3D" id="1.20.1250.20">
    <property type="entry name" value="MFS general substrate transporter like domains"/>
    <property type="match status" value="2"/>
</dbReference>
<dbReference type="InterPro" id="IPR011701">
    <property type="entry name" value="MFS"/>
</dbReference>
<dbReference type="InterPro" id="IPR020846">
    <property type="entry name" value="MFS_dom"/>
</dbReference>
<dbReference type="InterPro" id="IPR036259">
    <property type="entry name" value="MFS_trans_sf"/>
</dbReference>
<dbReference type="InterPro" id="IPR004736">
    <property type="entry name" value="MHS_symport"/>
</dbReference>
<dbReference type="NCBIfam" id="TIGR00883">
    <property type="entry name" value="2A0106"/>
    <property type="match status" value="1"/>
</dbReference>
<dbReference type="PANTHER" id="PTHR43045">
    <property type="entry name" value="SHIKIMATE TRANSPORTER"/>
    <property type="match status" value="1"/>
</dbReference>
<dbReference type="PANTHER" id="PTHR43045:SF4">
    <property type="entry name" value="TRANSPORTER YDFJ-RELATED"/>
    <property type="match status" value="1"/>
</dbReference>
<dbReference type="Pfam" id="PF07690">
    <property type="entry name" value="MFS_1"/>
    <property type="match status" value="1"/>
</dbReference>
<dbReference type="SUPFAM" id="SSF103473">
    <property type="entry name" value="MFS general substrate transporter"/>
    <property type="match status" value="1"/>
</dbReference>
<dbReference type="PROSITE" id="PS50850">
    <property type="entry name" value="MFS"/>
    <property type="match status" value="1"/>
</dbReference>